<sequence length="308" mass="34785">MTTTNKKTRYSAIKPSERLPEWIKPSLGTASQLEKVQNLVKEYRLNTICEEGRCPNRGECYASGTATFLLGGSICTRSCAFCQVEKGMPPQNIDPNESIRVAKAVLKLQLKYVVLTSVARDDLDDHGAIHFSRTIHAIRKTSPTTSIEVLTPDFWGGCIDKIKATKIQRERLKIVLKAKPVCFNHNLETVERLQKEVRRGATYHRSLELLKASREIDNEIPTKSGLMLGLGERSDEIIQTLKDLRSVNCQQVTIGQYLRPSLAHIPVQKYWLPKDFEHFKRIAEGLGFKKVNSGPLVRSSYHAELPQT</sequence>
<keyword id="KW-0004">4Fe-4S</keyword>
<keyword id="KW-0963">Cytoplasm</keyword>
<keyword id="KW-0408">Iron</keyword>
<keyword id="KW-0411">Iron-sulfur</keyword>
<keyword id="KW-0479">Metal-binding</keyword>
<keyword id="KW-1185">Reference proteome</keyword>
<keyword id="KW-0949">S-adenosyl-L-methionine</keyword>
<keyword id="KW-0808">Transferase</keyword>
<dbReference type="EC" id="2.8.1.8" evidence="1"/>
<dbReference type="EMBL" id="AE017126">
    <property type="protein sequence ID" value="AAQ00144.1"/>
    <property type="molecule type" value="Genomic_DNA"/>
</dbReference>
<dbReference type="RefSeq" id="NP_875491.1">
    <property type="nucleotide sequence ID" value="NC_005042.1"/>
</dbReference>
<dbReference type="RefSeq" id="WP_011125251.1">
    <property type="nucleotide sequence ID" value="NC_005042.1"/>
</dbReference>
<dbReference type="SMR" id="Q7VBJ3"/>
<dbReference type="STRING" id="167539.Pro_1099"/>
<dbReference type="EnsemblBacteria" id="AAQ00144">
    <property type="protein sequence ID" value="AAQ00144"/>
    <property type="gene ID" value="Pro_1099"/>
</dbReference>
<dbReference type="KEGG" id="pma:Pro_1099"/>
<dbReference type="PATRIC" id="fig|167539.5.peg.1149"/>
<dbReference type="eggNOG" id="COG0320">
    <property type="taxonomic scope" value="Bacteria"/>
</dbReference>
<dbReference type="HOGENOM" id="CLU_033144_2_1_3"/>
<dbReference type="OrthoDB" id="9787898at2"/>
<dbReference type="UniPathway" id="UPA00538">
    <property type="reaction ID" value="UER00593"/>
</dbReference>
<dbReference type="Proteomes" id="UP000001420">
    <property type="component" value="Chromosome"/>
</dbReference>
<dbReference type="GO" id="GO:0005737">
    <property type="term" value="C:cytoplasm"/>
    <property type="evidence" value="ECO:0007669"/>
    <property type="project" value="UniProtKB-SubCell"/>
</dbReference>
<dbReference type="GO" id="GO:0051539">
    <property type="term" value="F:4 iron, 4 sulfur cluster binding"/>
    <property type="evidence" value="ECO:0007669"/>
    <property type="project" value="UniProtKB-UniRule"/>
</dbReference>
<dbReference type="GO" id="GO:0016992">
    <property type="term" value="F:lipoate synthase activity"/>
    <property type="evidence" value="ECO:0007669"/>
    <property type="project" value="UniProtKB-UniRule"/>
</dbReference>
<dbReference type="GO" id="GO:0046872">
    <property type="term" value="F:metal ion binding"/>
    <property type="evidence" value="ECO:0007669"/>
    <property type="project" value="UniProtKB-KW"/>
</dbReference>
<dbReference type="CDD" id="cd01335">
    <property type="entry name" value="Radical_SAM"/>
    <property type="match status" value="1"/>
</dbReference>
<dbReference type="Gene3D" id="3.20.20.70">
    <property type="entry name" value="Aldolase class I"/>
    <property type="match status" value="1"/>
</dbReference>
<dbReference type="HAMAP" id="MF_00206">
    <property type="entry name" value="Lipoyl_synth"/>
    <property type="match status" value="1"/>
</dbReference>
<dbReference type="InterPro" id="IPR013785">
    <property type="entry name" value="Aldolase_TIM"/>
</dbReference>
<dbReference type="InterPro" id="IPR006638">
    <property type="entry name" value="Elp3/MiaA/NifB-like_rSAM"/>
</dbReference>
<dbReference type="InterPro" id="IPR003698">
    <property type="entry name" value="Lipoyl_synth"/>
</dbReference>
<dbReference type="InterPro" id="IPR007197">
    <property type="entry name" value="rSAM"/>
</dbReference>
<dbReference type="NCBIfam" id="TIGR00510">
    <property type="entry name" value="lipA"/>
    <property type="match status" value="1"/>
</dbReference>
<dbReference type="NCBIfam" id="NF004019">
    <property type="entry name" value="PRK05481.1"/>
    <property type="match status" value="1"/>
</dbReference>
<dbReference type="NCBIfam" id="NF009544">
    <property type="entry name" value="PRK12928.1"/>
    <property type="match status" value="1"/>
</dbReference>
<dbReference type="PANTHER" id="PTHR10949">
    <property type="entry name" value="LIPOYL SYNTHASE"/>
    <property type="match status" value="1"/>
</dbReference>
<dbReference type="PANTHER" id="PTHR10949:SF0">
    <property type="entry name" value="LIPOYL SYNTHASE, MITOCHONDRIAL"/>
    <property type="match status" value="1"/>
</dbReference>
<dbReference type="Pfam" id="PF08816">
    <property type="entry name" value="Ivy"/>
    <property type="match status" value="1"/>
</dbReference>
<dbReference type="Pfam" id="PF04055">
    <property type="entry name" value="Radical_SAM"/>
    <property type="match status" value="1"/>
</dbReference>
<dbReference type="PIRSF" id="PIRSF005963">
    <property type="entry name" value="Lipoyl_synth"/>
    <property type="match status" value="1"/>
</dbReference>
<dbReference type="SFLD" id="SFLDF00271">
    <property type="entry name" value="lipoyl_synthase"/>
    <property type="match status" value="1"/>
</dbReference>
<dbReference type="SFLD" id="SFLDG01058">
    <property type="entry name" value="lipoyl_synthase_like"/>
    <property type="match status" value="1"/>
</dbReference>
<dbReference type="SMART" id="SM00729">
    <property type="entry name" value="Elp3"/>
    <property type="match status" value="1"/>
</dbReference>
<dbReference type="SUPFAM" id="SSF102114">
    <property type="entry name" value="Radical SAM enzymes"/>
    <property type="match status" value="1"/>
</dbReference>
<dbReference type="PROSITE" id="PS51918">
    <property type="entry name" value="RADICAL_SAM"/>
    <property type="match status" value="1"/>
</dbReference>
<comment type="function">
    <text evidence="1">Catalyzes the radical-mediated insertion of two sulfur atoms into the C-6 and C-8 positions of the octanoyl moiety bound to the lipoyl domains of lipoate-dependent enzymes, thereby converting the octanoylated domains into lipoylated derivatives.</text>
</comment>
<comment type="catalytic activity">
    <reaction evidence="1">
        <text>[[Fe-S] cluster scaffold protein carrying a second [4Fe-4S](2+) cluster] + N(6)-octanoyl-L-lysyl-[protein] + 2 oxidized [2Fe-2S]-[ferredoxin] + 2 S-adenosyl-L-methionine + 4 H(+) = [[Fe-S] cluster scaffold protein] + N(6)-[(R)-dihydrolipoyl]-L-lysyl-[protein] + 4 Fe(3+) + 2 hydrogen sulfide + 2 5'-deoxyadenosine + 2 L-methionine + 2 reduced [2Fe-2S]-[ferredoxin]</text>
        <dbReference type="Rhea" id="RHEA:16585"/>
        <dbReference type="Rhea" id="RHEA-COMP:9928"/>
        <dbReference type="Rhea" id="RHEA-COMP:10000"/>
        <dbReference type="Rhea" id="RHEA-COMP:10001"/>
        <dbReference type="Rhea" id="RHEA-COMP:10475"/>
        <dbReference type="Rhea" id="RHEA-COMP:14568"/>
        <dbReference type="Rhea" id="RHEA-COMP:14569"/>
        <dbReference type="ChEBI" id="CHEBI:15378"/>
        <dbReference type="ChEBI" id="CHEBI:17319"/>
        <dbReference type="ChEBI" id="CHEBI:29034"/>
        <dbReference type="ChEBI" id="CHEBI:29919"/>
        <dbReference type="ChEBI" id="CHEBI:33722"/>
        <dbReference type="ChEBI" id="CHEBI:33737"/>
        <dbReference type="ChEBI" id="CHEBI:33738"/>
        <dbReference type="ChEBI" id="CHEBI:57844"/>
        <dbReference type="ChEBI" id="CHEBI:59789"/>
        <dbReference type="ChEBI" id="CHEBI:78809"/>
        <dbReference type="ChEBI" id="CHEBI:83100"/>
        <dbReference type="EC" id="2.8.1.8"/>
    </reaction>
</comment>
<comment type="cofactor">
    <cofactor evidence="1">
        <name>[4Fe-4S] cluster</name>
        <dbReference type="ChEBI" id="CHEBI:49883"/>
    </cofactor>
    <text evidence="1">Binds 2 [4Fe-4S] clusters per subunit. One cluster is coordinated with 3 cysteines and an exchangeable S-adenosyl-L-methionine.</text>
</comment>
<comment type="pathway">
    <text evidence="1">Protein modification; protein lipoylation via endogenous pathway; protein N(6)-(lipoyl)lysine from octanoyl-[acyl-carrier-protein]: step 2/2.</text>
</comment>
<comment type="subcellular location">
    <subcellularLocation>
        <location evidence="1">Cytoplasm</location>
    </subcellularLocation>
</comment>
<comment type="similarity">
    <text evidence="1">Belongs to the radical SAM superfamily. Lipoyl synthase family.</text>
</comment>
<evidence type="ECO:0000255" key="1">
    <source>
        <dbReference type="HAMAP-Rule" id="MF_00206"/>
    </source>
</evidence>
<evidence type="ECO:0000255" key="2">
    <source>
        <dbReference type="PROSITE-ProRule" id="PRU01266"/>
    </source>
</evidence>
<reference key="1">
    <citation type="journal article" date="2003" name="Proc. Natl. Acad. Sci. U.S.A.">
        <title>Genome sequence of the cyanobacterium Prochlorococcus marinus SS120, a nearly minimal oxyphototrophic genome.</title>
        <authorList>
            <person name="Dufresne A."/>
            <person name="Salanoubat M."/>
            <person name="Partensky F."/>
            <person name="Artiguenave F."/>
            <person name="Axmann I.M."/>
            <person name="Barbe V."/>
            <person name="Duprat S."/>
            <person name="Galperin M.Y."/>
            <person name="Koonin E.V."/>
            <person name="Le Gall F."/>
            <person name="Makarova K.S."/>
            <person name="Ostrowski M."/>
            <person name="Oztas S."/>
            <person name="Robert C."/>
            <person name="Rogozin I.B."/>
            <person name="Scanlan D.J."/>
            <person name="Tandeau de Marsac N."/>
            <person name="Weissenbach J."/>
            <person name="Wincker P."/>
            <person name="Wolf Y.I."/>
            <person name="Hess W.R."/>
        </authorList>
    </citation>
    <scope>NUCLEOTIDE SEQUENCE [LARGE SCALE GENOMIC DNA]</scope>
    <source>
        <strain>SARG / CCMP1375 / SS120</strain>
    </source>
</reference>
<name>LIPA2_PROMA</name>
<organism>
    <name type="scientific">Prochlorococcus marinus (strain SARG / CCMP1375 / SS120)</name>
    <dbReference type="NCBI Taxonomy" id="167539"/>
    <lineage>
        <taxon>Bacteria</taxon>
        <taxon>Bacillati</taxon>
        <taxon>Cyanobacteriota</taxon>
        <taxon>Cyanophyceae</taxon>
        <taxon>Synechococcales</taxon>
        <taxon>Prochlorococcaceae</taxon>
        <taxon>Prochlorococcus</taxon>
    </lineage>
</organism>
<feature type="chain" id="PRO_0000102337" description="Lipoyl synthase 2">
    <location>
        <begin position="1"/>
        <end position="308"/>
    </location>
</feature>
<feature type="domain" description="Radical SAM core" evidence="2">
    <location>
        <begin position="61"/>
        <end position="289"/>
    </location>
</feature>
<feature type="binding site" evidence="1">
    <location>
        <position position="49"/>
    </location>
    <ligand>
        <name>[4Fe-4S] cluster</name>
        <dbReference type="ChEBI" id="CHEBI:49883"/>
        <label>1</label>
    </ligand>
</feature>
<feature type="binding site" evidence="1">
    <location>
        <position position="54"/>
    </location>
    <ligand>
        <name>[4Fe-4S] cluster</name>
        <dbReference type="ChEBI" id="CHEBI:49883"/>
        <label>1</label>
    </ligand>
</feature>
<feature type="binding site" evidence="1">
    <location>
        <position position="60"/>
    </location>
    <ligand>
        <name>[4Fe-4S] cluster</name>
        <dbReference type="ChEBI" id="CHEBI:49883"/>
        <label>1</label>
    </ligand>
</feature>
<feature type="binding site" evidence="1">
    <location>
        <position position="75"/>
    </location>
    <ligand>
        <name>[4Fe-4S] cluster</name>
        <dbReference type="ChEBI" id="CHEBI:49883"/>
        <label>2</label>
        <note>4Fe-4S-S-AdoMet</note>
    </ligand>
</feature>
<feature type="binding site" evidence="1">
    <location>
        <position position="79"/>
    </location>
    <ligand>
        <name>[4Fe-4S] cluster</name>
        <dbReference type="ChEBI" id="CHEBI:49883"/>
        <label>2</label>
        <note>4Fe-4S-S-AdoMet</note>
    </ligand>
</feature>
<feature type="binding site" evidence="1">
    <location>
        <position position="82"/>
    </location>
    <ligand>
        <name>[4Fe-4S] cluster</name>
        <dbReference type="ChEBI" id="CHEBI:49883"/>
        <label>2</label>
        <note>4Fe-4S-S-AdoMet</note>
    </ligand>
</feature>
<feature type="binding site" evidence="1">
    <location>
        <position position="300"/>
    </location>
    <ligand>
        <name>[4Fe-4S] cluster</name>
        <dbReference type="ChEBI" id="CHEBI:49883"/>
        <label>1</label>
    </ligand>
</feature>
<accession>Q7VBJ3</accession>
<gene>
    <name evidence="1" type="primary">lipA2</name>
    <name type="synonym">lipA</name>
    <name type="ordered locus">Pro_1099</name>
</gene>
<proteinExistence type="inferred from homology"/>
<protein>
    <recommendedName>
        <fullName evidence="1">Lipoyl synthase 2</fullName>
        <ecNumber evidence="1">2.8.1.8</ecNumber>
    </recommendedName>
    <alternativeName>
        <fullName evidence="1">Lip-syn 2</fullName>
        <shortName evidence="1">LS 2</shortName>
    </alternativeName>
    <alternativeName>
        <fullName evidence="1">Lipoate synthase 2</fullName>
    </alternativeName>
    <alternativeName>
        <fullName evidence="1">Lipoic acid synthase 2</fullName>
    </alternativeName>
    <alternativeName>
        <fullName evidence="1">Sulfur insertion protein LipA 2</fullName>
    </alternativeName>
</protein>